<dbReference type="EMBL" id="AP009049">
    <property type="protein sequence ID" value="BAH06907.1"/>
    <property type="molecule type" value="Genomic_DNA"/>
</dbReference>
<dbReference type="RefSeq" id="WP_012102455.1">
    <property type="nucleotide sequence ID" value="NC_011837.1"/>
</dbReference>
<dbReference type="SMR" id="B9E332"/>
<dbReference type="KEGG" id="ckr:CKR_1856"/>
<dbReference type="HOGENOM" id="CLU_164837_0_0_9"/>
<dbReference type="Proteomes" id="UP000007969">
    <property type="component" value="Chromosome"/>
</dbReference>
<dbReference type="GO" id="GO:0005829">
    <property type="term" value="C:cytosol"/>
    <property type="evidence" value="ECO:0007669"/>
    <property type="project" value="TreeGrafter"/>
</dbReference>
<dbReference type="GO" id="GO:0048027">
    <property type="term" value="F:mRNA 5'-UTR binding"/>
    <property type="evidence" value="ECO:0007669"/>
    <property type="project" value="UniProtKB-UniRule"/>
</dbReference>
<dbReference type="GO" id="GO:0044781">
    <property type="term" value="P:bacterial-type flagellum organization"/>
    <property type="evidence" value="ECO:0007669"/>
    <property type="project" value="UniProtKB-KW"/>
</dbReference>
<dbReference type="GO" id="GO:0006402">
    <property type="term" value="P:mRNA catabolic process"/>
    <property type="evidence" value="ECO:0007669"/>
    <property type="project" value="InterPro"/>
</dbReference>
<dbReference type="GO" id="GO:0045947">
    <property type="term" value="P:negative regulation of translational initiation"/>
    <property type="evidence" value="ECO:0007669"/>
    <property type="project" value="UniProtKB-UniRule"/>
</dbReference>
<dbReference type="GO" id="GO:1902208">
    <property type="term" value="P:regulation of bacterial-type flagellum assembly"/>
    <property type="evidence" value="ECO:0007669"/>
    <property type="project" value="UniProtKB-UniRule"/>
</dbReference>
<dbReference type="GO" id="GO:0006109">
    <property type="term" value="P:regulation of carbohydrate metabolic process"/>
    <property type="evidence" value="ECO:0007669"/>
    <property type="project" value="InterPro"/>
</dbReference>
<dbReference type="FunFam" id="2.60.40.4380:FF:000002">
    <property type="entry name" value="Translational regulator CsrA"/>
    <property type="match status" value="1"/>
</dbReference>
<dbReference type="Gene3D" id="2.60.40.4380">
    <property type="entry name" value="Translational regulator CsrA"/>
    <property type="match status" value="1"/>
</dbReference>
<dbReference type="HAMAP" id="MF_00167">
    <property type="entry name" value="CsrA"/>
    <property type="match status" value="1"/>
</dbReference>
<dbReference type="InterPro" id="IPR003751">
    <property type="entry name" value="CsrA"/>
</dbReference>
<dbReference type="InterPro" id="IPR036107">
    <property type="entry name" value="CsrA_sf"/>
</dbReference>
<dbReference type="NCBIfam" id="TIGR00202">
    <property type="entry name" value="csrA"/>
    <property type="match status" value="1"/>
</dbReference>
<dbReference type="NCBIfam" id="NF002469">
    <property type="entry name" value="PRK01712.1"/>
    <property type="match status" value="1"/>
</dbReference>
<dbReference type="PANTHER" id="PTHR34984">
    <property type="entry name" value="CARBON STORAGE REGULATOR"/>
    <property type="match status" value="1"/>
</dbReference>
<dbReference type="PANTHER" id="PTHR34984:SF1">
    <property type="entry name" value="CARBON STORAGE REGULATOR"/>
    <property type="match status" value="1"/>
</dbReference>
<dbReference type="Pfam" id="PF02599">
    <property type="entry name" value="CsrA"/>
    <property type="match status" value="1"/>
</dbReference>
<dbReference type="SUPFAM" id="SSF117130">
    <property type="entry name" value="CsrA-like"/>
    <property type="match status" value="1"/>
</dbReference>
<protein>
    <recommendedName>
        <fullName evidence="1">Translational regulator CsrA</fullName>
    </recommendedName>
</protein>
<keyword id="KW-1005">Bacterial flagellum biogenesis</keyword>
<keyword id="KW-0963">Cytoplasm</keyword>
<keyword id="KW-0678">Repressor</keyword>
<keyword id="KW-0694">RNA-binding</keyword>
<keyword id="KW-0810">Translation regulation</keyword>
<reference key="1">
    <citation type="submission" date="2005-09" db="EMBL/GenBank/DDBJ databases">
        <title>Complete genome sequence of Clostridium kluyveri and comparative genomics of Clostridia species.</title>
        <authorList>
            <person name="Inui M."/>
            <person name="Nonaka H."/>
            <person name="Shinoda Y."/>
            <person name="Ikenaga Y."/>
            <person name="Abe M."/>
            <person name="Naito K."/>
            <person name="Vertes A.A."/>
            <person name="Yukawa H."/>
        </authorList>
    </citation>
    <scope>NUCLEOTIDE SEQUENCE [LARGE SCALE GENOMIC DNA]</scope>
    <source>
        <strain>NBRC 12016</strain>
    </source>
</reference>
<comment type="function">
    <text evidence="1">A translational regulator that binds mRNA to regulate translation initiation and/or mRNA stability. Usually binds in the 5'-UTR at or near the Shine-Dalgarno sequence preventing ribosome-binding, thus repressing translation. Its main target seems to be the major flagellin gene, while its function is anatagonized by FliW.</text>
</comment>
<comment type="subunit">
    <text evidence="1">Homodimer; the beta-strands of each monomer intercalate to form a hydrophobic core, while the alpha-helices form wings that extend away from the core.</text>
</comment>
<comment type="subcellular location">
    <subcellularLocation>
        <location evidence="1">Cytoplasm</location>
    </subcellularLocation>
</comment>
<comment type="similarity">
    <text evidence="1">Belongs to the CsrA/RsmA family.</text>
</comment>
<gene>
    <name evidence="1" type="primary">csrA</name>
    <name type="ordered locus">CKR_1856</name>
</gene>
<feature type="chain" id="PRO_1000123622" description="Translational regulator CsrA">
    <location>
        <begin position="1"/>
        <end position="73"/>
    </location>
</feature>
<sequence length="73" mass="8126">MLVISRKKGESLLIGEDIEITVTKIEEGAVKLSISAPRSVTILRKELYREIEEENKNSAASDISVLKKLKGKK</sequence>
<proteinExistence type="inferred from homology"/>
<organism>
    <name type="scientific">Clostridium kluyveri (strain NBRC 12016)</name>
    <dbReference type="NCBI Taxonomy" id="583346"/>
    <lineage>
        <taxon>Bacteria</taxon>
        <taxon>Bacillati</taxon>
        <taxon>Bacillota</taxon>
        <taxon>Clostridia</taxon>
        <taxon>Eubacteriales</taxon>
        <taxon>Clostridiaceae</taxon>
        <taxon>Clostridium</taxon>
    </lineage>
</organism>
<accession>B9E332</accession>
<evidence type="ECO:0000255" key="1">
    <source>
        <dbReference type="HAMAP-Rule" id="MF_00167"/>
    </source>
</evidence>
<name>CSRA_CLOK1</name>